<feature type="chain" id="PRO_0000112481" description="N-acetyl-gamma-glutamyl-phosphate reductase">
    <location>
        <begin position="1"/>
        <end position="334"/>
    </location>
</feature>
<feature type="active site" evidence="1">
    <location>
        <position position="154"/>
    </location>
</feature>
<proteinExistence type="inferred from homology"/>
<accession>Q66G72</accession>
<reference key="1">
    <citation type="journal article" date="2004" name="Proc. Natl. Acad. Sci. U.S.A.">
        <title>Insights into the evolution of Yersinia pestis through whole-genome comparison with Yersinia pseudotuberculosis.</title>
        <authorList>
            <person name="Chain P.S.G."/>
            <person name="Carniel E."/>
            <person name="Larimer F.W."/>
            <person name="Lamerdin J."/>
            <person name="Stoutland P.O."/>
            <person name="Regala W.M."/>
            <person name="Georgescu A.M."/>
            <person name="Vergez L.M."/>
            <person name="Land M.L."/>
            <person name="Motin V.L."/>
            <person name="Brubaker R.R."/>
            <person name="Fowler J."/>
            <person name="Hinnebusch J."/>
            <person name="Marceau M."/>
            <person name="Medigue C."/>
            <person name="Simonet M."/>
            <person name="Chenal-Francisque V."/>
            <person name="Souza B."/>
            <person name="Dacheux D."/>
            <person name="Elliott J.M."/>
            <person name="Derbise A."/>
            <person name="Hauser L.J."/>
            <person name="Garcia E."/>
        </authorList>
    </citation>
    <scope>NUCLEOTIDE SEQUENCE [LARGE SCALE GENOMIC DNA]</scope>
    <source>
        <strain>IP32953</strain>
    </source>
</reference>
<organism>
    <name type="scientific">Yersinia pseudotuberculosis serotype I (strain IP32953)</name>
    <dbReference type="NCBI Taxonomy" id="273123"/>
    <lineage>
        <taxon>Bacteria</taxon>
        <taxon>Pseudomonadati</taxon>
        <taxon>Pseudomonadota</taxon>
        <taxon>Gammaproteobacteria</taxon>
        <taxon>Enterobacterales</taxon>
        <taxon>Yersiniaceae</taxon>
        <taxon>Yersinia</taxon>
    </lineage>
</organism>
<evidence type="ECO:0000255" key="1">
    <source>
        <dbReference type="HAMAP-Rule" id="MF_00150"/>
    </source>
</evidence>
<gene>
    <name evidence="1" type="primary">argC</name>
    <name type="ordered locus">YPTB0110</name>
</gene>
<keyword id="KW-0028">Amino-acid biosynthesis</keyword>
<keyword id="KW-0055">Arginine biosynthesis</keyword>
<keyword id="KW-0963">Cytoplasm</keyword>
<keyword id="KW-0521">NADP</keyword>
<keyword id="KW-0560">Oxidoreductase</keyword>
<dbReference type="EC" id="1.2.1.38" evidence="1"/>
<dbReference type="EMBL" id="BX936398">
    <property type="protein sequence ID" value="CAH19350.1"/>
    <property type="molecule type" value="Genomic_DNA"/>
</dbReference>
<dbReference type="RefSeq" id="WP_011191468.1">
    <property type="nucleotide sequence ID" value="NC_006155.1"/>
</dbReference>
<dbReference type="SMR" id="Q66G72"/>
<dbReference type="GeneID" id="49787919"/>
<dbReference type="KEGG" id="ypo:BZ17_2486"/>
<dbReference type="KEGG" id="yps:YPTB0110"/>
<dbReference type="PATRIC" id="fig|273123.14.peg.2605"/>
<dbReference type="UniPathway" id="UPA00068">
    <property type="reaction ID" value="UER00108"/>
</dbReference>
<dbReference type="Proteomes" id="UP000001011">
    <property type="component" value="Chromosome"/>
</dbReference>
<dbReference type="GO" id="GO:0005737">
    <property type="term" value="C:cytoplasm"/>
    <property type="evidence" value="ECO:0007669"/>
    <property type="project" value="UniProtKB-SubCell"/>
</dbReference>
<dbReference type="GO" id="GO:0003942">
    <property type="term" value="F:N-acetyl-gamma-glutamyl-phosphate reductase activity"/>
    <property type="evidence" value="ECO:0007669"/>
    <property type="project" value="UniProtKB-UniRule"/>
</dbReference>
<dbReference type="GO" id="GO:0051287">
    <property type="term" value="F:NAD binding"/>
    <property type="evidence" value="ECO:0007669"/>
    <property type="project" value="InterPro"/>
</dbReference>
<dbReference type="GO" id="GO:0070401">
    <property type="term" value="F:NADP+ binding"/>
    <property type="evidence" value="ECO:0007669"/>
    <property type="project" value="InterPro"/>
</dbReference>
<dbReference type="GO" id="GO:0006526">
    <property type="term" value="P:L-arginine biosynthetic process"/>
    <property type="evidence" value="ECO:0007669"/>
    <property type="project" value="UniProtKB-UniRule"/>
</dbReference>
<dbReference type="CDD" id="cd23934">
    <property type="entry name" value="AGPR_1_C"/>
    <property type="match status" value="1"/>
</dbReference>
<dbReference type="CDD" id="cd17895">
    <property type="entry name" value="AGPR_1_N"/>
    <property type="match status" value="1"/>
</dbReference>
<dbReference type="FunFam" id="3.30.360.10:FF:000014">
    <property type="entry name" value="N-acetyl-gamma-glutamyl-phosphate reductase"/>
    <property type="match status" value="1"/>
</dbReference>
<dbReference type="FunFam" id="3.40.50.720:FF:000117">
    <property type="entry name" value="N-acetyl-gamma-glutamyl-phosphate reductase"/>
    <property type="match status" value="1"/>
</dbReference>
<dbReference type="Gene3D" id="3.30.360.10">
    <property type="entry name" value="Dihydrodipicolinate Reductase, domain 2"/>
    <property type="match status" value="1"/>
</dbReference>
<dbReference type="Gene3D" id="3.40.50.720">
    <property type="entry name" value="NAD(P)-binding Rossmann-like Domain"/>
    <property type="match status" value="1"/>
</dbReference>
<dbReference type="HAMAP" id="MF_00150">
    <property type="entry name" value="ArgC_type1"/>
    <property type="match status" value="1"/>
</dbReference>
<dbReference type="InterPro" id="IPR023013">
    <property type="entry name" value="AGPR_AS"/>
</dbReference>
<dbReference type="InterPro" id="IPR000706">
    <property type="entry name" value="AGPR_type-1"/>
</dbReference>
<dbReference type="InterPro" id="IPR036291">
    <property type="entry name" value="NAD(P)-bd_dom_sf"/>
</dbReference>
<dbReference type="InterPro" id="IPR050085">
    <property type="entry name" value="NAGSA_dehydrogenase"/>
</dbReference>
<dbReference type="InterPro" id="IPR000534">
    <property type="entry name" value="Semialdehyde_DH_NAD-bd"/>
</dbReference>
<dbReference type="NCBIfam" id="TIGR01850">
    <property type="entry name" value="argC"/>
    <property type="match status" value="1"/>
</dbReference>
<dbReference type="PANTHER" id="PTHR32338:SF10">
    <property type="entry name" value="N-ACETYL-GAMMA-GLUTAMYL-PHOSPHATE REDUCTASE, CHLOROPLASTIC-RELATED"/>
    <property type="match status" value="1"/>
</dbReference>
<dbReference type="PANTHER" id="PTHR32338">
    <property type="entry name" value="N-ACETYL-GAMMA-GLUTAMYL-PHOSPHATE REDUCTASE, CHLOROPLASTIC-RELATED-RELATED"/>
    <property type="match status" value="1"/>
</dbReference>
<dbReference type="Pfam" id="PF01118">
    <property type="entry name" value="Semialdhyde_dh"/>
    <property type="match status" value="1"/>
</dbReference>
<dbReference type="Pfam" id="PF22698">
    <property type="entry name" value="Semialdhyde_dhC_1"/>
    <property type="match status" value="1"/>
</dbReference>
<dbReference type="SMART" id="SM00859">
    <property type="entry name" value="Semialdhyde_dh"/>
    <property type="match status" value="1"/>
</dbReference>
<dbReference type="SUPFAM" id="SSF55347">
    <property type="entry name" value="Glyceraldehyde-3-phosphate dehydrogenase-like, C-terminal domain"/>
    <property type="match status" value="1"/>
</dbReference>
<dbReference type="SUPFAM" id="SSF51735">
    <property type="entry name" value="NAD(P)-binding Rossmann-fold domains"/>
    <property type="match status" value="1"/>
</dbReference>
<dbReference type="PROSITE" id="PS01224">
    <property type="entry name" value="ARGC"/>
    <property type="match status" value="1"/>
</dbReference>
<protein>
    <recommendedName>
        <fullName evidence="1">N-acetyl-gamma-glutamyl-phosphate reductase</fullName>
        <shortName evidence="1">AGPR</shortName>
        <ecNumber evidence="1">1.2.1.38</ecNumber>
    </recommendedName>
    <alternativeName>
        <fullName evidence="1">N-acetyl-glutamate semialdehyde dehydrogenase</fullName>
        <shortName evidence="1">NAGSA dehydrogenase</shortName>
    </alternativeName>
</protein>
<sequence length="334" mass="35854">MLNTLIVGASGYAGAELTAYLNRHPHMNITGLAVSAQSADAGKLLSELHPQLKGILDLPLQPLVDVAQAAKGIDVVFLATAHEVSHDLAPQFLAAGCVVFDLSGAFRVRDAAFYSQYYGFEHQHPDWLDKAVYGLAEWQSEDIKQAQLIAVPGCYPTASQLALKPLVDGQLLNDAQWPVINAVSGVSGAGRKASMGNSFCEVSLQPYGLFTHRHQPEIVAHLGTPVIFTPHLGNFARGILATITCRLKAGVTAQNIADAYHHAYQNKPLVRLYQQGVPALKAVVGLPFCDIGFSVQGEHLIIVATEDNLLKGAAAQAVQCMNIRFGFPETQSLL</sequence>
<name>ARGC_YERPS</name>
<comment type="function">
    <text evidence="1">Catalyzes the NADPH-dependent reduction of N-acetyl-5-glutamyl phosphate to yield N-acetyl-L-glutamate 5-semialdehyde.</text>
</comment>
<comment type="catalytic activity">
    <reaction evidence="1">
        <text>N-acetyl-L-glutamate 5-semialdehyde + phosphate + NADP(+) = N-acetyl-L-glutamyl 5-phosphate + NADPH + H(+)</text>
        <dbReference type="Rhea" id="RHEA:21588"/>
        <dbReference type="ChEBI" id="CHEBI:15378"/>
        <dbReference type="ChEBI" id="CHEBI:29123"/>
        <dbReference type="ChEBI" id="CHEBI:43474"/>
        <dbReference type="ChEBI" id="CHEBI:57783"/>
        <dbReference type="ChEBI" id="CHEBI:57936"/>
        <dbReference type="ChEBI" id="CHEBI:58349"/>
        <dbReference type="EC" id="1.2.1.38"/>
    </reaction>
</comment>
<comment type="pathway">
    <text evidence="1">Amino-acid biosynthesis; L-arginine biosynthesis; N(2)-acetyl-L-ornithine from L-glutamate: step 3/4.</text>
</comment>
<comment type="subcellular location">
    <subcellularLocation>
        <location evidence="1">Cytoplasm</location>
    </subcellularLocation>
</comment>
<comment type="similarity">
    <text evidence="1">Belongs to the NAGSA dehydrogenase family. Type 1 subfamily.</text>
</comment>